<proteinExistence type="inferred from homology"/>
<comment type="function">
    <text evidence="1">Specifically methylates position 2 of adenine 2503 in 23S rRNA and position 2 of adenine 37 in tRNAs.</text>
</comment>
<comment type="catalytic activity">
    <reaction evidence="1">
        <text>adenosine(2503) in 23S rRNA + 2 reduced [2Fe-2S]-[ferredoxin] + 2 S-adenosyl-L-methionine = 2-methyladenosine(2503) in 23S rRNA + 5'-deoxyadenosine + L-methionine + 2 oxidized [2Fe-2S]-[ferredoxin] + S-adenosyl-L-homocysteine</text>
        <dbReference type="Rhea" id="RHEA:42916"/>
        <dbReference type="Rhea" id="RHEA-COMP:10000"/>
        <dbReference type="Rhea" id="RHEA-COMP:10001"/>
        <dbReference type="Rhea" id="RHEA-COMP:10152"/>
        <dbReference type="Rhea" id="RHEA-COMP:10282"/>
        <dbReference type="ChEBI" id="CHEBI:17319"/>
        <dbReference type="ChEBI" id="CHEBI:33737"/>
        <dbReference type="ChEBI" id="CHEBI:33738"/>
        <dbReference type="ChEBI" id="CHEBI:57844"/>
        <dbReference type="ChEBI" id="CHEBI:57856"/>
        <dbReference type="ChEBI" id="CHEBI:59789"/>
        <dbReference type="ChEBI" id="CHEBI:74411"/>
        <dbReference type="ChEBI" id="CHEBI:74497"/>
        <dbReference type="EC" id="2.1.1.192"/>
    </reaction>
</comment>
<comment type="catalytic activity">
    <reaction evidence="1">
        <text>adenosine(37) in tRNA + 2 reduced [2Fe-2S]-[ferredoxin] + 2 S-adenosyl-L-methionine = 2-methyladenosine(37) in tRNA + 5'-deoxyadenosine + L-methionine + 2 oxidized [2Fe-2S]-[ferredoxin] + S-adenosyl-L-homocysteine</text>
        <dbReference type="Rhea" id="RHEA:43332"/>
        <dbReference type="Rhea" id="RHEA-COMP:10000"/>
        <dbReference type="Rhea" id="RHEA-COMP:10001"/>
        <dbReference type="Rhea" id="RHEA-COMP:10162"/>
        <dbReference type="Rhea" id="RHEA-COMP:10485"/>
        <dbReference type="ChEBI" id="CHEBI:17319"/>
        <dbReference type="ChEBI" id="CHEBI:33737"/>
        <dbReference type="ChEBI" id="CHEBI:33738"/>
        <dbReference type="ChEBI" id="CHEBI:57844"/>
        <dbReference type="ChEBI" id="CHEBI:57856"/>
        <dbReference type="ChEBI" id="CHEBI:59789"/>
        <dbReference type="ChEBI" id="CHEBI:74411"/>
        <dbReference type="ChEBI" id="CHEBI:74497"/>
        <dbReference type="EC" id="2.1.1.192"/>
    </reaction>
</comment>
<comment type="cofactor">
    <cofactor evidence="1">
        <name>[4Fe-4S] cluster</name>
        <dbReference type="ChEBI" id="CHEBI:49883"/>
    </cofactor>
    <text evidence="1">Binds 1 [4Fe-4S] cluster. The cluster is coordinated with 3 cysteines and an exchangeable S-adenosyl-L-methionine.</text>
</comment>
<comment type="subcellular location">
    <subcellularLocation>
        <location evidence="1">Cytoplasm</location>
    </subcellularLocation>
</comment>
<comment type="miscellaneous">
    <text evidence="1">Reaction proceeds by a ping-pong mechanism involving intermediate methylation of a conserved cysteine residue.</text>
</comment>
<comment type="similarity">
    <text evidence="1">Belongs to the radical SAM superfamily. RlmN family.</text>
</comment>
<feature type="chain" id="PRO_0000350234" description="Probable dual-specificity RNA methyltransferase RlmN">
    <location>
        <begin position="1"/>
        <end position="353"/>
    </location>
</feature>
<feature type="domain" description="Radical SAM core" evidence="2">
    <location>
        <begin position="112"/>
        <end position="341"/>
    </location>
</feature>
<feature type="active site" description="Proton acceptor" evidence="1">
    <location>
        <position position="104"/>
    </location>
</feature>
<feature type="active site" description="S-methylcysteine intermediate" evidence="1">
    <location>
        <position position="346"/>
    </location>
</feature>
<feature type="binding site" evidence="1">
    <location>
        <position position="126"/>
    </location>
    <ligand>
        <name>[4Fe-4S] cluster</name>
        <dbReference type="ChEBI" id="CHEBI:49883"/>
        <note>4Fe-4S-S-AdoMet</note>
    </ligand>
</feature>
<feature type="binding site" evidence="1">
    <location>
        <position position="130"/>
    </location>
    <ligand>
        <name>[4Fe-4S] cluster</name>
        <dbReference type="ChEBI" id="CHEBI:49883"/>
        <note>4Fe-4S-S-AdoMet</note>
    </ligand>
</feature>
<feature type="binding site" evidence="1">
    <location>
        <position position="133"/>
    </location>
    <ligand>
        <name>[4Fe-4S] cluster</name>
        <dbReference type="ChEBI" id="CHEBI:49883"/>
        <note>4Fe-4S-S-AdoMet</note>
    </ligand>
</feature>
<feature type="binding site" evidence="1">
    <location>
        <begin position="173"/>
        <end position="174"/>
    </location>
    <ligand>
        <name>S-adenosyl-L-methionine</name>
        <dbReference type="ChEBI" id="CHEBI:59789"/>
    </ligand>
</feature>
<feature type="binding site" evidence="1">
    <location>
        <position position="205"/>
    </location>
    <ligand>
        <name>S-adenosyl-L-methionine</name>
        <dbReference type="ChEBI" id="CHEBI:59789"/>
    </ligand>
</feature>
<feature type="binding site" evidence="1">
    <location>
        <begin position="228"/>
        <end position="230"/>
    </location>
    <ligand>
        <name>S-adenosyl-L-methionine</name>
        <dbReference type="ChEBI" id="CHEBI:59789"/>
    </ligand>
</feature>
<feature type="binding site" evidence="1">
    <location>
        <position position="304"/>
    </location>
    <ligand>
        <name>S-adenosyl-L-methionine</name>
        <dbReference type="ChEBI" id="CHEBI:59789"/>
    </ligand>
</feature>
<feature type="disulfide bond" description="(transient)" evidence="1">
    <location>
        <begin position="119"/>
        <end position="346"/>
    </location>
</feature>
<keyword id="KW-0004">4Fe-4S</keyword>
<keyword id="KW-0963">Cytoplasm</keyword>
<keyword id="KW-1015">Disulfide bond</keyword>
<keyword id="KW-0408">Iron</keyword>
<keyword id="KW-0411">Iron-sulfur</keyword>
<keyword id="KW-0479">Metal-binding</keyword>
<keyword id="KW-0489">Methyltransferase</keyword>
<keyword id="KW-1185">Reference proteome</keyword>
<keyword id="KW-0698">rRNA processing</keyword>
<keyword id="KW-0949">S-adenosyl-L-methionine</keyword>
<keyword id="KW-0808">Transferase</keyword>
<keyword id="KW-0819">tRNA processing</keyword>
<gene>
    <name evidence="1" type="primary">rlmN</name>
    <name type="ordered locus">LA_0841</name>
</gene>
<name>RLMN_LEPIN</name>
<dbReference type="EC" id="2.1.1.192" evidence="1"/>
<dbReference type="EMBL" id="AE010300">
    <property type="protein sequence ID" value="AAN48040.1"/>
    <property type="molecule type" value="Genomic_DNA"/>
</dbReference>
<dbReference type="RefSeq" id="NP_711022.1">
    <property type="nucleotide sequence ID" value="NC_004342.2"/>
</dbReference>
<dbReference type="RefSeq" id="WP_000622604.1">
    <property type="nucleotide sequence ID" value="NC_004342.2"/>
</dbReference>
<dbReference type="SMR" id="Q8F7V1"/>
<dbReference type="FunCoup" id="Q8F7V1">
    <property type="interactions" value="492"/>
</dbReference>
<dbReference type="STRING" id="189518.LA_0841"/>
<dbReference type="PaxDb" id="189518-LA_0841"/>
<dbReference type="EnsemblBacteria" id="AAN48040">
    <property type="protein sequence ID" value="AAN48040"/>
    <property type="gene ID" value="LA_0841"/>
</dbReference>
<dbReference type="KEGG" id="lil:LA_0841"/>
<dbReference type="PATRIC" id="fig|189518.3.peg.846"/>
<dbReference type="HOGENOM" id="CLU_029101_0_1_12"/>
<dbReference type="InParanoid" id="Q8F7V1"/>
<dbReference type="OrthoDB" id="9793973at2"/>
<dbReference type="Proteomes" id="UP000001408">
    <property type="component" value="Chromosome I"/>
</dbReference>
<dbReference type="GO" id="GO:0005737">
    <property type="term" value="C:cytoplasm"/>
    <property type="evidence" value="ECO:0007669"/>
    <property type="project" value="UniProtKB-SubCell"/>
</dbReference>
<dbReference type="GO" id="GO:0051539">
    <property type="term" value="F:4 iron, 4 sulfur cluster binding"/>
    <property type="evidence" value="ECO:0007669"/>
    <property type="project" value="UniProtKB-UniRule"/>
</dbReference>
<dbReference type="GO" id="GO:0046872">
    <property type="term" value="F:metal ion binding"/>
    <property type="evidence" value="ECO:0007669"/>
    <property type="project" value="UniProtKB-KW"/>
</dbReference>
<dbReference type="GO" id="GO:0070040">
    <property type="term" value="F:rRNA (adenine(2503)-C2-)-methyltransferase activity"/>
    <property type="evidence" value="ECO:0007669"/>
    <property type="project" value="UniProtKB-UniRule"/>
</dbReference>
<dbReference type="GO" id="GO:0019843">
    <property type="term" value="F:rRNA binding"/>
    <property type="evidence" value="ECO:0007669"/>
    <property type="project" value="UniProtKB-UniRule"/>
</dbReference>
<dbReference type="GO" id="GO:0002935">
    <property type="term" value="F:tRNA (adenine(37)-C2)-methyltransferase activity"/>
    <property type="evidence" value="ECO:0007669"/>
    <property type="project" value="UniProtKB-UniRule"/>
</dbReference>
<dbReference type="GO" id="GO:0000049">
    <property type="term" value="F:tRNA binding"/>
    <property type="evidence" value="ECO:0007669"/>
    <property type="project" value="UniProtKB-UniRule"/>
</dbReference>
<dbReference type="GO" id="GO:0070475">
    <property type="term" value="P:rRNA base methylation"/>
    <property type="evidence" value="ECO:0000318"/>
    <property type="project" value="GO_Central"/>
</dbReference>
<dbReference type="GO" id="GO:0030488">
    <property type="term" value="P:tRNA methylation"/>
    <property type="evidence" value="ECO:0000318"/>
    <property type="project" value="GO_Central"/>
</dbReference>
<dbReference type="CDD" id="cd01335">
    <property type="entry name" value="Radical_SAM"/>
    <property type="match status" value="1"/>
</dbReference>
<dbReference type="FunFam" id="3.20.20.70:FF:000014">
    <property type="entry name" value="Probable dual-specificity RNA methyltransferase RlmN"/>
    <property type="match status" value="1"/>
</dbReference>
<dbReference type="Gene3D" id="1.10.150.530">
    <property type="match status" value="1"/>
</dbReference>
<dbReference type="Gene3D" id="3.20.20.70">
    <property type="entry name" value="Aldolase class I"/>
    <property type="match status" value="1"/>
</dbReference>
<dbReference type="HAMAP" id="MF_01849">
    <property type="entry name" value="RNA_methyltr_RlmN"/>
    <property type="match status" value="1"/>
</dbReference>
<dbReference type="InterPro" id="IPR013785">
    <property type="entry name" value="Aldolase_TIM"/>
</dbReference>
<dbReference type="InterPro" id="IPR040072">
    <property type="entry name" value="Methyltransferase_A"/>
</dbReference>
<dbReference type="InterPro" id="IPR048641">
    <property type="entry name" value="RlmN_N"/>
</dbReference>
<dbReference type="InterPro" id="IPR027492">
    <property type="entry name" value="RNA_MTrfase_RlmN"/>
</dbReference>
<dbReference type="InterPro" id="IPR004383">
    <property type="entry name" value="rRNA_lsu_MTrfase_RlmN/Cfr"/>
</dbReference>
<dbReference type="InterPro" id="IPR007197">
    <property type="entry name" value="rSAM"/>
</dbReference>
<dbReference type="NCBIfam" id="TIGR00048">
    <property type="entry name" value="rRNA_mod_RlmN"/>
    <property type="match status" value="1"/>
</dbReference>
<dbReference type="PANTHER" id="PTHR30544">
    <property type="entry name" value="23S RRNA METHYLTRANSFERASE"/>
    <property type="match status" value="1"/>
</dbReference>
<dbReference type="PANTHER" id="PTHR30544:SF5">
    <property type="entry name" value="RADICAL SAM CORE DOMAIN-CONTAINING PROTEIN"/>
    <property type="match status" value="1"/>
</dbReference>
<dbReference type="Pfam" id="PF04055">
    <property type="entry name" value="Radical_SAM"/>
    <property type="match status" value="1"/>
</dbReference>
<dbReference type="Pfam" id="PF21016">
    <property type="entry name" value="RlmN_N"/>
    <property type="match status" value="1"/>
</dbReference>
<dbReference type="PIRSF" id="PIRSF006004">
    <property type="entry name" value="CHP00048"/>
    <property type="match status" value="1"/>
</dbReference>
<dbReference type="SFLD" id="SFLDF00275">
    <property type="entry name" value="adenosine_C2_methyltransferase"/>
    <property type="match status" value="1"/>
</dbReference>
<dbReference type="SFLD" id="SFLDG01062">
    <property type="entry name" value="methyltransferase_(Class_A)"/>
    <property type="match status" value="1"/>
</dbReference>
<dbReference type="SUPFAM" id="SSF102114">
    <property type="entry name" value="Radical SAM enzymes"/>
    <property type="match status" value="1"/>
</dbReference>
<dbReference type="PROSITE" id="PS51918">
    <property type="entry name" value="RADICAL_SAM"/>
    <property type="match status" value="1"/>
</dbReference>
<sequence length="353" mass="39835">MISENLGENQTEKIPLKGRTLKELSEIMITLGEKPFRAKQIYHGLYVNRYETWDQFTTFSKIFKEKLEELCSLTHLQVVKQLKSVDGTQKFTFTSESGNGKEFEAVWIPSGDGGRKTICISSQIGCTLNCKFCATAKLEFQGNLKAHEIVDQILQVEKIVGDKATNVVFMGMGEPLHNYFNVIRAASIFHDPDAFNLGAKRITISTSGVVNGIRRFIENKEPYNFAISLNHPDPKGRLQIMDIEEKFSLPELLQAAKDFTRELKRRITFEYVMIPGVNMGFENANKLVKIAKSLDCKINVIPLNTEFFGWRRPTREEIAEFIALLEPAGVPILNRRSPGKDIFGACGMLASKS</sequence>
<organism>
    <name type="scientific">Leptospira interrogans serogroup Icterohaemorrhagiae serovar Lai (strain 56601)</name>
    <dbReference type="NCBI Taxonomy" id="189518"/>
    <lineage>
        <taxon>Bacteria</taxon>
        <taxon>Pseudomonadati</taxon>
        <taxon>Spirochaetota</taxon>
        <taxon>Spirochaetia</taxon>
        <taxon>Leptospirales</taxon>
        <taxon>Leptospiraceae</taxon>
        <taxon>Leptospira</taxon>
    </lineage>
</organism>
<protein>
    <recommendedName>
        <fullName evidence="1">Probable dual-specificity RNA methyltransferase RlmN</fullName>
        <ecNumber evidence="1">2.1.1.192</ecNumber>
    </recommendedName>
    <alternativeName>
        <fullName evidence="1">23S rRNA (adenine(2503)-C(2))-methyltransferase</fullName>
    </alternativeName>
    <alternativeName>
        <fullName evidence="1">23S rRNA m2A2503 methyltransferase</fullName>
    </alternativeName>
    <alternativeName>
        <fullName evidence="1">Ribosomal RNA large subunit methyltransferase N</fullName>
    </alternativeName>
    <alternativeName>
        <fullName evidence="1">tRNA (adenine(37)-C(2))-methyltransferase</fullName>
    </alternativeName>
    <alternativeName>
        <fullName evidence="1">tRNA m2A37 methyltransferase</fullName>
    </alternativeName>
</protein>
<evidence type="ECO:0000255" key="1">
    <source>
        <dbReference type="HAMAP-Rule" id="MF_01849"/>
    </source>
</evidence>
<evidence type="ECO:0000255" key="2">
    <source>
        <dbReference type="PROSITE-ProRule" id="PRU01266"/>
    </source>
</evidence>
<reference key="1">
    <citation type="journal article" date="2003" name="Nature">
        <title>Unique physiological and pathogenic features of Leptospira interrogans revealed by whole-genome sequencing.</title>
        <authorList>
            <person name="Ren S.-X."/>
            <person name="Fu G."/>
            <person name="Jiang X.-G."/>
            <person name="Zeng R."/>
            <person name="Miao Y.-G."/>
            <person name="Xu H."/>
            <person name="Zhang Y.-X."/>
            <person name="Xiong H."/>
            <person name="Lu G."/>
            <person name="Lu L.-F."/>
            <person name="Jiang H.-Q."/>
            <person name="Jia J."/>
            <person name="Tu Y.-F."/>
            <person name="Jiang J.-X."/>
            <person name="Gu W.-Y."/>
            <person name="Zhang Y.-Q."/>
            <person name="Cai Z."/>
            <person name="Sheng H.-H."/>
            <person name="Yin H.-F."/>
            <person name="Zhang Y."/>
            <person name="Zhu G.-F."/>
            <person name="Wan M."/>
            <person name="Huang H.-L."/>
            <person name="Qian Z."/>
            <person name="Wang S.-Y."/>
            <person name="Ma W."/>
            <person name="Yao Z.-J."/>
            <person name="Shen Y."/>
            <person name="Qiang B.-Q."/>
            <person name="Xia Q.-C."/>
            <person name="Guo X.-K."/>
            <person name="Danchin A."/>
            <person name="Saint Girons I."/>
            <person name="Somerville R.L."/>
            <person name="Wen Y.-M."/>
            <person name="Shi M.-H."/>
            <person name="Chen Z."/>
            <person name="Xu J.-G."/>
            <person name="Zhao G.-P."/>
        </authorList>
    </citation>
    <scope>NUCLEOTIDE SEQUENCE [LARGE SCALE GENOMIC DNA]</scope>
    <source>
        <strain>56601</strain>
    </source>
</reference>
<accession>Q8F7V1</accession>